<reference key="1">
    <citation type="journal article" date="1996" name="DNA Res.">
        <title>Sequence analysis of the genome of the unicellular cyanobacterium Synechocystis sp. strain PCC6803. II. Sequence determination of the entire genome and assignment of potential protein-coding regions.</title>
        <authorList>
            <person name="Kaneko T."/>
            <person name="Sato S."/>
            <person name="Kotani H."/>
            <person name="Tanaka A."/>
            <person name="Asamizu E."/>
            <person name="Nakamura Y."/>
            <person name="Miyajima N."/>
            <person name="Hirosawa M."/>
            <person name="Sugiura M."/>
            <person name="Sasamoto S."/>
            <person name="Kimura T."/>
            <person name="Hosouchi T."/>
            <person name="Matsuno A."/>
            <person name="Muraki A."/>
            <person name="Nakazaki N."/>
            <person name="Naruo K."/>
            <person name="Okumura S."/>
            <person name="Shimpo S."/>
            <person name="Takeuchi C."/>
            <person name="Wada T."/>
            <person name="Watanabe A."/>
            <person name="Yamada M."/>
            <person name="Yasuda M."/>
            <person name="Tabata S."/>
        </authorList>
    </citation>
    <scope>NUCLEOTIDE SEQUENCE [LARGE SCALE GENOMIC DNA]</scope>
    <source>
        <strain>ATCC 27184 / PCC 6803 / Kazusa</strain>
    </source>
</reference>
<evidence type="ECO:0000255" key="1">
    <source>
        <dbReference type="HAMAP-Rule" id="MF_00164"/>
    </source>
</evidence>
<name>GLMS_SYNY3</name>
<organism>
    <name type="scientific">Synechocystis sp. (strain ATCC 27184 / PCC 6803 / Kazusa)</name>
    <dbReference type="NCBI Taxonomy" id="1111708"/>
    <lineage>
        <taxon>Bacteria</taxon>
        <taxon>Bacillati</taxon>
        <taxon>Cyanobacteriota</taxon>
        <taxon>Cyanophyceae</taxon>
        <taxon>Synechococcales</taxon>
        <taxon>Merismopediaceae</taxon>
        <taxon>Synechocystis</taxon>
    </lineage>
</organism>
<gene>
    <name evidence="1" type="primary">glmS</name>
    <name type="ordered locus">sll0220</name>
</gene>
<proteinExistence type="inferred from homology"/>
<feature type="initiator methionine" description="Removed" evidence="1">
    <location>
        <position position="1"/>
    </location>
</feature>
<feature type="chain" id="PRO_0000135399" description="Glutamine--fructose-6-phosphate aminotransferase [isomerizing]">
    <location>
        <begin position="2"/>
        <end position="631"/>
    </location>
</feature>
<feature type="domain" description="Glutamine amidotransferase type-2" evidence="1">
    <location>
        <begin position="2"/>
        <end position="225"/>
    </location>
</feature>
<feature type="domain" description="SIS 1" evidence="1">
    <location>
        <begin position="298"/>
        <end position="446"/>
    </location>
</feature>
<feature type="domain" description="SIS 2" evidence="1">
    <location>
        <begin position="480"/>
        <end position="621"/>
    </location>
</feature>
<feature type="active site" description="Nucleophile; for GATase activity" evidence="1">
    <location>
        <position position="2"/>
    </location>
</feature>
<feature type="active site" description="For Fru-6P isomerization activity" evidence="1">
    <location>
        <position position="626"/>
    </location>
</feature>
<keyword id="KW-0032">Aminotransferase</keyword>
<keyword id="KW-0963">Cytoplasm</keyword>
<keyword id="KW-0315">Glutamine amidotransferase</keyword>
<keyword id="KW-1185">Reference proteome</keyword>
<keyword id="KW-0677">Repeat</keyword>
<keyword id="KW-0808">Transferase</keyword>
<dbReference type="EC" id="2.6.1.16" evidence="1"/>
<dbReference type="EMBL" id="BA000022">
    <property type="protein sequence ID" value="BAA16727.1"/>
    <property type="molecule type" value="Genomic_DNA"/>
</dbReference>
<dbReference type="PIR" id="S74575">
    <property type="entry name" value="S74575"/>
</dbReference>
<dbReference type="SMR" id="P72720"/>
<dbReference type="FunCoup" id="P72720">
    <property type="interactions" value="328"/>
</dbReference>
<dbReference type="STRING" id="1148.gene:10497582"/>
<dbReference type="PaxDb" id="1148-1651800"/>
<dbReference type="EnsemblBacteria" id="BAA16727">
    <property type="protein sequence ID" value="BAA16727"/>
    <property type="gene ID" value="BAA16727"/>
</dbReference>
<dbReference type="KEGG" id="syn:sll0220"/>
<dbReference type="eggNOG" id="COG0449">
    <property type="taxonomic scope" value="Bacteria"/>
</dbReference>
<dbReference type="InParanoid" id="P72720"/>
<dbReference type="PhylomeDB" id="P72720"/>
<dbReference type="Proteomes" id="UP000001425">
    <property type="component" value="Chromosome"/>
</dbReference>
<dbReference type="GO" id="GO:0005829">
    <property type="term" value="C:cytosol"/>
    <property type="evidence" value="ECO:0000318"/>
    <property type="project" value="GO_Central"/>
</dbReference>
<dbReference type="GO" id="GO:0097367">
    <property type="term" value="F:carbohydrate derivative binding"/>
    <property type="evidence" value="ECO:0007669"/>
    <property type="project" value="InterPro"/>
</dbReference>
<dbReference type="GO" id="GO:0004360">
    <property type="term" value="F:glutamine-fructose-6-phosphate transaminase (isomerizing) activity"/>
    <property type="evidence" value="ECO:0000318"/>
    <property type="project" value="GO_Central"/>
</dbReference>
<dbReference type="GO" id="GO:0005975">
    <property type="term" value="P:carbohydrate metabolic process"/>
    <property type="evidence" value="ECO:0007669"/>
    <property type="project" value="UniProtKB-UniRule"/>
</dbReference>
<dbReference type="GO" id="GO:0006002">
    <property type="term" value="P:fructose 6-phosphate metabolic process"/>
    <property type="evidence" value="ECO:0000318"/>
    <property type="project" value="GO_Central"/>
</dbReference>
<dbReference type="GO" id="GO:0006487">
    <property type="term" value="P:protein N-linked glycosylation"/>
    <property type="evidence" value="ECO:0000318"/>
    <property type="project" value="GO_Central"/>
</dbReference>
<dbReference type="GO" id="GO:0006047">
    <property type="term" value="P:UDP-N-acetylglucosamine metabolic process"/>
    <property type="evidence" value="ECO:0000318"/>
    <property type="project" value="GO_Central"/>
</dbReference>
<dbReference type="CDD" id="cd00714">
    <property type="entry name" value="GFAT"/>
    <property type="match status" value="1"/>
</dbReference>
<dbReference type="CDD" id="cd05008">
    <property type="entry name" value="SIS_GlmS_GlmD_1"/>
    <property type="match status" value="1"/>
</dbReference>
<dbReference type="CDD" id="cd05009">
    <property type="entry name" value="SIS_GlmS_GlmD_2"/>
    <property type="match status" value="1"/>
</dbReference>
<dbReference type="FunFam" id="3.40.50.10490:FF:000001">
    <property type="entry name" value="Glutamine--fructose-6-phosphate aminotransferase [isomerizing]"/>
    <property type="match status" value="1"/>
</dbReference>
<dbReference type="FunFam" id="3.40.50.10490:FF:000002">
    <property type="entry name" value="Glutamine--fructose-6-phosphate aminotransferase [isomerizing]"/>
    <property type="match status" value="1"/>
</dbReference>
<dbReference type="FunFam" id="3.60.20.10:FF:000006">
    <property type="entry name" value="Glutamine--fructose-6-phosphate aminotransferase [isomerizing]"/>
    <property type="match status" value="1"/>
</dbReference>
<dbReference type="Gene3D" id="3.40.50.10490">
    <property type="entry name" value="Glucose-6-phosphate isomerase like protein, domain 1"/>
    <property type="match status" value="2"/>
</dbReference>
<dbReference type="Gene3D" id="3.60.20.10">
    <property type="entry name" value="Glutamine Phosphoribosylpyrophosphate, subunit 1, domain 1"/>
    <property type="match status" value="1"/>
</dbReference>
<dbReference type="HAMAP" id="MF_00164">
    <property type="entry name" value="GlmS"/>
    <property type="match status" value="1"/>
</dbReference>
<dbReference type="InterPro" id="IPR017932">
    <property type="entry name" value="GATase_2_dom"/>
</dbReference>
<dbReference type="InterPro" id="IPR005855">
    <property type="entry name" value="GFAT"/>
</dbReference>
<dbReference type="InterPro" id="IPR047084">
    <property type="entry name" value="GFAT_N"/>
</dbReference>
<dbReference type="InterPro" id="IPR035466">
    <property type="entry name" value="GlmS/AgaS_SIS"/>
</dbReference>
<dbReference type="InterPro" id="IPR035490">
    <property type="entry name" value="GlmS/FrlB_SIS"/>
</dbReference>
<dbReference type="InterPro" id="IPR029055">
    <property type="entry name" value="Ntn_hydrolases_N"/>
</dbReference>
<dbReference type="InterPro" id="IPR001347">
    <property type="entry name" value="SIS_dom"/>
</dbReference>
<dbReference type="InterPro" id="IPR046348">
    <property type="entry name" value="SIS_dom_sf"/>
</dbReference>
<dbReference type="NCBIfam" id="TIGR01135">
    <property type="entry name" value="glmS"/>
    <property type="match status" value="1"/>
</dbReference>
<dbReference type="NCBIfam" id="NF001484">
    <property type="entry name" value="PRK00331.1"/>
    <property type="match status" value="1"/>
</dbReference>
<dbReference type="PANTHER" id="PTHR10937">
    <property type="entry name" value="GLUCOSAMINE--FRUCTOSE-6-PHOSPHATE AMINOTRANSFERASE, ISOMERIZING"/>
    <property type="match status" value="1"/>
</dbReference>
<dbReference type="PANTHER" id="PTHR10937:SF0">
    <property type="entry name" value="GLUTAMINE--FRUCTOSE-6-PHOSPHATE TRANSAMINASE (ISOMERIZING)"/>
    <property type="match status" value="1"/>
</dbReference>
<dbReference type="Pfam" id="PF13522">
    <property type="entry name" value="GATase_6"/>
    <property type="match status" value="1"/>
</dbReference>
<dbReference type="Pfam" id="PF01380">
    <property type="entry name" value="SIS"/>
    <property type="match status" value="2"/>
</dbReference>
<dbReference type="SUPFAM" id="SSF56235">
    <property type="entry name" value="N-terminal nucleophile aminohydrolases (Ntn hydrolases)"/>
    <property type="match status" value="1"/>
</dbReference>
<dbReference type="SUPFAM" id="SSF53697">
    <property type="entry name" value="SIS domain"/>
    <property type="match status" value="1"/>
</dbReference>
<dbReference type="PROSITE" id="PS51278">
    <property type="entry name" value="GATASE_TYPE_2"/>
    <property type="match status" value="1"/>
</dbReference>
<dbReference type="PROSITE" id="PS51464">
    <property type="entry name" value="SIS"/>
    <property type="match status" value="2"/>
</dbReference>
<sequence length="631" mass="69607">MCGIVGYIGTQTAVNILIEGLERLEYRGYDSAGIATVTEGKIESVRAKGKLFNLKEKLENHSNFSRLGIGHTRWATHGKPEEHNAHPHLDNQQRIAVVQNGIIENYQTLRDQLKEKGYQFYSETDTEVIPILIADILKDLPSDDPDEALLEAIGKAVHQLEGAFAIAVLDAHCPEQLIVARQQAPLILGFGQGEFFCASDVTALVHHTTTVLSLENGEIARLTPLGVEVYDFNLKRVRKLPRTLDWSATTVEKQGFRHFMLKEIYEQPAVVRTCLATYLNEQWRAADHPSHSPVFLGLDPQLTKNLQHIQVLACGTSWHAGLVGKYLLEQLAGIPTTVHYASEFRYAAPPLTPHTLTIGVTQSGETADTLAALEMEKQRRLTLEDDYKPLILGITNRPESTLATMVNEIINTHAGIEIGVAATKTFVAQVLAFYFLALDIAFQRHSLSLEAIEHIMVGLRQLPAQIETILEQQGSAIEALAHEFAETQDFIFLGRGINFPIALEGALKLKEISYIHAEGYPAGEMKHGPIALLDAKVPVVAIAMPGSVHDKVISNAQEAKARDARLIGVTPMDDSQARSVFDDLLLVPHVEEMLSPIVAVIPLQLLSYHIAARRGLDVDQPRNLAKSVTVE</sequence>
<accession>P72720</accession>
<comment type="function">
    <text evidence="1">Catalyzes the first step in hexosamine metabolism, converting fructose-6P into glucosamine-6P using glutamine as a nitrogen source.</text>
</comment>
<comment type="catalytic activity">
    <reaction evidence="1">
        <text>D-fructose 6-phosphate + L-glutamine = D-glucosamine 6-phosphate + L-glutamate</text>
        <dbReference type="Rhea" id="RHEA:13237"/>
        <dbReference type="ChEBI" id="CHEBI:29985"/>
        <dbReference type="ChEBI" id="CHEBI:58359"/>
        <dbReference type="ChEBI" id="CHEBI:58725"/>
        <dbReference type="ChEBI" id="CHEBI:61527"/>
        <dbReference type="EC" id="2.6.1.16"/>
    </reaction>
</comment>
<comment type="subunit">
    <text evidence="1">Homodimer.</text>
</comment>
<comment type="subcellular location">
    <subcellularLocation>
        <location evidence="1">Cytoplasm</location>
    </subcellularLocation>
</comment>
<protein>
    <recommendedName>
        <fullName evidence="1">Glutamine--fructose-6-phosphate aminotransferase [isomerizing]</fullName>
        <ecNumber evidence="1">2.6.1.16</ecNumber>
    </recommendedName>
    <alternativeName>
        <fullName evidence="1">D-fructose-6-phosphate amidotransferase</fullName>
    </alternativeName>
    <alternativeName>
        <fullName evidence="1">GFAT</fullName>
    </alternativeName>
    <alternativeName>
        <fullName evidence="1">Glucosamine-6-phosphate synthase</fullName>
    </alternativeName>
    <alternativeName>
        <fullName evidence="1">Hexosephosphate aminotransferase</fullName>
    </alternativeName>
    <alternativeName>
        <fullName evidence="1">L-glutamine--D-fructose-6-phosphate amidotransferase</fullName>
    </alternativeName>
</protein>